<sequence length="160" mass="17084">MPALILPLIEAAVHWPVRGALLGLDLGTKTIGVAASDPDRKLATGVETIARKAFTADAARLLALAAERTACGFVLGLPLNMDGSEGPRAQSTRAFARNLSRLTELPIGLWDERLSTAAVERELIANDVSRAKRAKVIDEHAAIFILQGALDRLAALRRAE</sequence>
<evidence type="ECO:0000255" key="1">
    <source>
        <dbReference type="HAMAP-Rule" id="MF_00651"/>
    </source>
</evidence>
<dbReference type="EC" id="3.1.-.-" evidence="1"/>
<dbReference type="EMBL" id="CP001096">
    <property type="protein sequence ID" value="ACF02023.1"/>
    <property type="molecule type" value="Genomic_DNA"/>
</dbReference>
<dbReference type="SMR" id="B3Q9X0"/>
<dbReference type="KEGG" id="rpt:Rpal_3523"/>
<dbReference type="HOGENOM" id="CLU_098240_1_1_5"/>
<dbReference type="OrthoDB" id="9796140at2"/>
<dbReference type="Proteomes" id="UP000001725">
    <property type="component" value="Chromosome"/>
</dbReference>
<dbReference type="GO" id="GO:0005829">
    <property type="term" value="C:cytosol"/>
    <property type="evidence" value="ECO:0007669"/>
    <property type="project" value="TreeGrafter"/>
</dbReference>
<dbReference type="GO" id="GO:0004518">
    <property type="term" value="F:nuclease activity"/>
    <property type="evidence" value="ECO:0007669"/>
    <property type="project" value="UniProtKB-KW"/>
</dbReference>
<dbReference type="GO" id="GO:0000967">
    <property type="term" value="P:rRNA 5'-end processing"/>
    <property type="evidence" value="ECO:0007669"/>
    <property type="project" value="UniProtKB-UniRule"/>
</dbReference>
<dbReference type="CDD" id="cd16964">
    <property type="entry name" value="YqgF"/>
    <property type="match status" value="1"/>
</dbReference>
<dbReference type="Gene3D" id="3.30.420.140">
    <property type="entry name" value="YqgF/RNase H-like domain"/>
    <property type="match status" value="1"/>
</dbReference>
<dbReference type="HAMAP" id="MF_00651">
    <property type="entry name" value="Nuclease_YqgF"/>
    <property type="match status" value="1"/>
</dbReference>
<dbReference type="InterPro" id="IPR012337">
    <property type="entry name" value="RNaseH-like_sf"/>
</dbReference>
<dbReference type="InterPro" id="IPR005227">
    <property type="entry name" value="YqgF"/>
</dbReference>
<dbReference type="InterPro" id="IPR006641">
    <property type="entry name" value="YqgF/RNaseH-like_dom"/>
</dbReference>
<dbReference type="InterPro" id="IPR037027">
    <property type="entry name" value="YqgF/RNaseH-like_dom_sf"/>
</dbReference>
<dbReference type="NCBIfam" id="TIGR00250">
    <property type="entry name" value="RNAse_H_YqgF"/>
    <property type="match status" value="1"/>
</dbReference>
<dbReference type="PANTHER" id="PTHR33317">
    <property type="entry name" value="POLYNUCLEOTIDYL TRANSFERASE, RIBONUCLEASE H-LIKE SUPERFAMILY PROTEIN"/>
    <property type="match status" value="1"/>
</dbReference>
<dbReference type="PANTHER" id="PTHR33317:SF4">
    <property type="entry name" value="POLYNUCLEOTIDYL TRANSFERASE, RIBONUCLEASE H-LIKE SUPERFAMILY PROTEIN"/>
    <property type="match status" value="1"/>
</dbReference>
<dbReference type="Pfam" id="PF03652">
    <property type="entry name" value="RuvX"/>
    <property type="match status" value="1"/>
</dbReference>
<dbReference type="SMART" id="SM00732">
    <property type="entry name" value="YqgFc"/>
    <property type="match status" value="1"/>
</dbReference>
<dbReference type="SUPFAM" id="SSF53098">
    <property type="entry name" value="Ribonuclease H-like"/>
    <property type="match status" value="1"/>
</dbReference>
<comment type="function">
    <text evidence="1">Could be a nuclease involved in processing of the 5'-end of pre-16S rRNA.</text>
</comment>
<comment type="subcellular location">
    <subcellularLocation>
        <location evidence="1">Cytoplasm</location>
    </subcellularLocation>
</comment>
<comment type="similarity">
    <text evidence="1">Belongs to the YqgF nuclease family.</text>
</comment>
<gene>
    <name type="ordered locus">Rpal_3523</name>
</gene>
<name>YQGF_RHOPT</name>
<accession>B3Q9X0</accession>
<proteinExistence type="inferred from homology"/>
<reference key="1">
    <citation type="submission" date="2008-05" db="EMBL/GenBank/DDBJ databases">
        <title>Complete sequence of Rhodopseudomonas palustris TIE-1.</title>
        <authorList>
            <consortium name="US DOE Joint Genome Institute"/>
            <person name="Lucas S."/>
            <person name="Copeland A."/>
            <person name="Lapidus A."/>
            <person name="Glavina del Rio T."/>
            <person name="Dalin E."/>
            <person name="Tice H."/>
            <person name="Pitluck S."/>
            <person name="Chain P."/>
            <person name="Malfatti S."/>
            <person name="Shin M."/>
            <person name="Vergez L."/>
            <person name="Lang D."/>
            <person name="Schmutz J."/>
            <person name="Larimer F."/>
            <person name="Land M."/>
            <person name="Hauser L."/>
            <person name="Kyrpides N."/>
            <person name="Mikhailova N."/>
            <person name="Emerson D."/>
            <person name="Newman D.K."/>
            <person name="Roden E."/>
            <person name="Richardson P."/>
        </authorList>
    </citation>
    <scope>NUCLEOTIDE SEQUENCE [LARGE SCALE GENOMIC DNA]</scope>
    <source>
        <strain>TIE-1</strain>
    </source>
</reference>
<protein>
    <recommendedName>
        <fullName evidence="1">Putative pre-16S rRNA nuclease</fullName>
        <ecNumber evidence="1">3.1.-.-</ecNumber>
    </recommendedName>
</protein>
<feature type="chain" id="PRO_1000131064" description="Putative pre-16S rRNA nuclease">
    <location>
        <begin position="1"/>
        <end position="160"/>
    </location>
</feature>
<keyword id="KW-0963">Cytoplasm</keyword>
<keyword id="KW-0378">Hydrolase</keyword>
<keyword id="KW-0540">Nuclease</keyword>
<keyword id="KW-0690">Ribosome biogenesis</keyword>
<organism>
    <name type="scientific">Rhodopseudomonas palustris (strain TIE-1)</name>
    <dbReference type="NCBI Taxonomy" id="395960"/>
    <lineage>
        <taxon>Bacteria</taxon>
        <taxon>Pseudomonadati</taxon>
        <taxon>Pseudomonadota</taxon>
        <taxon>Alphaproteobacteria</taxon>
        <taxon>Hyphomicrobiales</taxon>
        <taxon>Nitrobacteraceae</taxon>
        <taxon>Rhodopseudomonas</taxon>
    </lineage>
</organism>